<organism>
    <name type="scientific">Calamus usitatus</name>
    <name type="common">Palm tree</name>
    <dbReference type="NCBI Taxonomy" id="4712"/>
    <lineage>
        <taxon>Eukaryota</taxon>
        <taxon>Viridiplantae</taxon>
        <taxon>Streptophyta</taxon>
        <taxon>Embryophyta</taxon>
        <taxon>Tracheophyta</taxon>
        <taxon>Spermatophyta</taxon>
        <taxon>Magnoliopsida</taxon>
        <taxon>Liliopsida</taxon>
        <taxon>Arecaceae</taxon>
        <taxon>Calamoideae</taxon>
        <taxon>Calameae</taxon>
        <taxon>Calaminae</taxon>
        <taxon>Calamus</taxon>
    </lineage>
</organism>
<dbReference type="EC" id="7.1.2.2" evidence="1"/>
<dbReference type="EMBL" id="AF233081">
    <property type="protein sequence ID" value="AAF64287.1"/>
    <property type="molecule type" value="Genomic_DNA"/>
</dbReference>
<dbReference type="SMR" id="Q9MU82"/>
<dbReference type="GO" id="GO:0009535">
    <property type="term" value="C:chloroplast thylakoid membrane"/>
    <property type="evidence" value="ECO:0007669"/>
    <property type="project" value="UniProtKB-SubCell"/>
</dbReference>
<dbReference type="GO" id="GO:0005739">
    <property type="term" value="C:mitochondrion"/>
    <property type="evidence" value="ECO:0007669"/>
    <property type="project" value="GOC"/>
</dbReference>
<dbReference type="GO" id="GO:0045259">
    <property type="term" value="C:proton-transporting ATP synthase complex"/>
    <property type="evidence" value="ECO:0007669"/>
    <property type="project" value="UniProtKB-KW"/>
</dbReference>
<dbReference type="GO" id="GO:0005524">
    <property type="term" value="F:ATP binding"/>
    <property type="evidence" value="ECO:0007669"/>
    <property type="project" value="UniProtKB-UniRule"/>
</dbReference>
<dbReference type="GO" id="GO:0016887">
    <property type="term" value="F:ATP hydrolysis activity"/>
    <property type="evidence" value="ECO:0007669"/>
    <property type="project" value="InterPro"/>
</dbReference>
<dbReference type="GO" id="GO:0046933">
    <property type="term" value="F:proton-transporting ATP synthase activity, rotational mechanism"/>
    <property type="evidence" value="ECO:0007669"/>
    <property type="project" value="UniProtKB-UniRule"/>
</dbReference>
<dbReference type="GO" id="GO:0042776">
    <property type="term" value="P:proton motive force-driven mitochondrial ATP synthesis"/>
    <property type="evidence" value="ECO:0007669"/>
    <property type="project" value="TreeGrafter"/>
</dbReference>
<dbReference type="CDD" id="cd18110">
    <property type="entry name" value="ATP-synt_F1_beta_C"/>
    <property type="match status" value="1"/>
</dbReference>
<dbReference type="CDD" id="cd18115">
    <property type="entry name" value="ATP-synt_F1_beta_N"/>
    <property type="match status" value="1"/>
</dbReference>
<dbReference type="CDD" id="cd01133">
    <property type="entry name" value="F1-ATPase_beta_CD"/>
    <property type="match status" value="1"/>
</dbReference>
<dbReference type="FunFam" id="1.10.1140.10:FF:000001">
    <property type="entry name" value="ATP synthase subunit beta"/>
    <property type="match status" value="1"/>
</dbReference>
<dbReference type="FunFam" id="3.40.50.12240:FF:000006">
    <property type="entry name" value="ATP synthase subunit beta"/>
    <property type="match status" value="1"/>
</dbReference>
<dbReference type="FunFam" id="3.40.50.300:FF:000004">
    <property type="entry name" value="ATP synthase subunit beta"/>
    <property type="match status" value="1"/>
</dbReference>
<dbReference type="FunFam" id="2.40.10.170:FF:000002">
    <property type="entry name" value="ATP synthase subunit beta, chloroplastic"/>
    <property type="match status" value="1"/>
</dbReference>
<dbReference type="Gene3D" id="2.40.10.170">
    <property type="match status" value="1"/>
</dbReference>
<dbReference type="Gene3D" id="1.10.1140.10">
    <property type="entry name" value="Bovine Mitochondrial F1-atpase, Atp Synthase Beta Chain, Chain D, domain 3"/>
    <property type="match status" value="1"/>
</dbReference>
<dbReference type="Gene3D" id="3.40.50.300">
    <property type="entry name" value="P-loop containing nucleotide triphosphate hydrolases"/>
    <property type="match status" value="1"/>
</dbReference>
<dbReference type="HAMAP" id="MF_01347">
    <property type="entry name" value="ATP_synth_beta_bact"/>
    <property type="match status" value="1"/>
</dbReference>
<dbReference type="InterPro" id="IPR003593">
    <property type="entry name" value="AAA+_ATPase"/>
</dbReference>
<dbReference type="InterPro" id="IPR055190">
    <property type="entry name" value="ATP-synt_VA_C"/>
</dbReference>
<dbReference type="InterPro" id="IPR005722">
    <property type="entry name" value="ATP_synth_F1_bsu"/>
</dbReference>
<dbReference type="InterPro" id="IPR020003">
    <property type="entry name" value="ATPase_a/bsu_AS"/>
</dbReference>
<dbReference type="InterPro" id="IPR050053">
    <property type="entry name" value="ATPase_alpha/beta_chains"/>
</dbReference>
<dbReference type="InterPro" id="IPR004100">
    <property type="entry name" value="ATPase_F1/V1/A1_a/bsu_N"/>
</dbReference>
<dbReference type="InterPro" id="IPR036121">
    <property type="entry name" value="ATPase_F1/V1/A1_a/bsu_N_sf"/>
</dbReference>
<dbReference type="InterPro" id="IPR000194">
    <property type="entry name" value="ATPase_F1/V1/A1_a/bsu_nucl-bd"/>
</dbReference>
<dbReference type="InterPro" id="IPR024034">
    <property type="entry name" value="ATPase_F1/V1_b/a_C"/>
</dbReference>
<dbReference type="InterPro" id="IPR027417">
    <property type="entry name" value="P-loop_NTPase"/>
</dbReference>
<dbReference type="NCBIfam" id="TIGR01039">
    <property type="entry name" value="atpD"/>
    <property type="match status" value="1"/>
</dbReference>
<dbReference type="PANTHER" id="PTHR15184">
    <property type="entry name" value="ATP SYNTHASE"/>
    <property type="match status" value="1"/>
</dbReference>
<dbReference type="PANTHER" id="PTHR15184:SF71">
    <property type="entry name" value="ATP SYNTHASE SUBUNIT BETA, MITOCHONDRIAL"/>
    <property type="match status" value="1"/>
</dbReference>
<dbReference type="Pfam" id="PF00006">
    <property type="entry name" value="ATP-synt_ab"/>
    <property type="match status" value="1"/>
</dbReference>
<dbReference type="Pfam" id="PF02874">
    <property type="entry name" value="ATP-synt_ab_N"/>
    <property type="match status" value="1"/>
</dbReference>
<dbReference type="Pfam" id="PF22919">
    <property type="entry name" value="ATP-synt_VA_C"/>
    <property type="match status" value="1"/>
</dbReference>
<dbReference type="SMART" id="SM00382">
    <property type="entry name" value="AAA"/>
    <property type="match status" value="1"/>
</dbReference>
<dbReference type="SUPFAM" id="SSF47917">
    <property type="entry name" value="C-terminal domain of alpha and beta subunits of F1 ATP synthase"/>
    <property type="match status" value="1"/>
</dbReference>
<dbReference type="SUPFAM" id="SSF50615">
    <property type="entry name" value="N-terminal domain of alpha and beta subunits of F1 ATP synthase"/>
    <property type="match status" value="1"/>
</dbReference>
<dbReference type="SUPFAM" id="SSF52540">
    <property type="entry name" value="P-loop containing nucleoside triphosphate hydrolases"/>
    <property type="match status" value="1"/>
</dbReference>
<dbReference type="PROSITE" id="PS00152">
    <property type="entry name" value="ATPASE_ALPHA_BETA"/>
    <property type="match status" value="1"/>
</dbReference>
<gene>
    <name evidence="1" type="primary">atpB</name>
</gene>
<feature type="chain" id="PRO_0000254454" description="ATP synthase subunit beta, chloroplastic">
    <location>
        <begin position="1"/>
        <end position="498"/>
    </location>
</feature>
<feature type="binding site" evidence="1">
    <location>
        <begin position="172"/>
        <end position="179"/>
    </location>
    <ligand>
        <name>ATP</name>
        <dbReference type="ChEBI" id="CHEBI:30616"/>
    </ligand>
</feature>
<proteinExistence type="inferred from homology"/>
<reference key="1">
    <citation type="journal article" date="2000" name="Bot. J. Linn. Soc.">
        <title>Angiosperm phylogeny inferred from 18S rDNA, rbcL, and atpB sequences.</title>
        <authorList>
            <person name="Soltis D.E."/>
            <person name="Soltis P.S."/>
            <person name="Chase M.W."/>
            <person name="Mort M.E."/>
            <person name="Albach D.C."/>
            <person name="Zanis M."/>
            <person name="Savolainen V."/>
            <person name="Hahn W.H."/>
            <person name="Hoot S.B."/>
            <person name="Fay M.F."/>
            <person name="Axtell M."/>
            <person name="Swensen S.M."/>
            <person name="Prince L.M."/>
            <person name="Kress W.J."/>
            <person name="Nixon K.C."/>
            <person name="Farris J.S."/>
        </authorList>
        <dbReference type="AGRICOLA" id="IND22068796"/>
    </citation>
    <scope>NUCLEOTIDE SEQUENCE [GENOMIC DNA]</scope>
</reference>
<geneLocation type="chloroplast"/>
<accession>Q9MU82</accession>
<name>ATPB_CALUS</name>
<keyword id="KW-0066">ATP synthesis</keyword>
<keyword id="KW-0067">ATP-binding</keyword>
<keyword id="KW-0139">CF(1)</keyword>
<keyword id="KW-0150">Chloroplast</keyword>
<keyword id="KW-0375">Hydrogen ion transport</keyword>
<keyword id="KW-0406">Ion transport</keyword>
<keyword id="KW-0472">Membrane</keyword>
<keyword id="KW-0547">Nucleotide-binding</keyword>
<keyword id="KW-0934">Plastid</keyword>
<keyword id="KW-0793">Thylakoid</keyword>
<keyword id="KW-1278">Translocase</keyword>
<keyword id="KW-0813">Transport</keyword>
<sequence length="498" mass="53777">MRTNPTTSSSVVSTLEEKNLGRIAQIIGPVLDVVFPPGKMPNIYNALVVEGRDTVGQQINVTCEVQQLLGNNRVRAVAMSATDGLMRGMEVIDTGAPLSVPVGGATLGRIFNVLGEPVDNLGPVDTRTTSPIHRSAPAFIQLDTKLSIFETGIKVVDLLAPYRRGGKIGLFGGAGVGKTVLIMELINNIAKAHGGVSVFGGVGERTREGNDLYMEMKESGVINEKNIAESKVALVYGQMNEPPGARMRVGLTALTMAEYFRDVNEQDVLLFIDNIFRFVQAGSEVSALLGRMPSAVGYQPTLSTEMGSLQERITSTKEGSITSIQAVYVPADDLTDPAPATTFAHLDATTVLSRVLAAKGIYPAVDPLDSTSTMLQPRIVGEEHYETAQRVKQTSQRYKELQDIIAILGLDELSEEDRLTVARARKIERFLSQPFFVAEVFTGSPGKYVGLAETIRGFQLILSGELDGLPEQAFYLVGNIDEATAKAMNLEVESKLKK</sequence>
<evidence type="ECO:0000255" key="1">
    <source>
        <dbReference type="HAMAP-Rule" id="MF_01347"/>
    </source>
</evidence>
<protein>
    <recommendedName>
        <fullName evidence="1">ATP synthase subunit beta, chloroplastic</fullName>
        <ecNumber evidence="1">7.1.2.2</ecNumber>
    </recommendedName>
    <alternativeName>
        <fullName evidence="1">ATP synthase F1 sector subunit beta</fullName>
    </alternativeName>
    <alternativeName>
        <fullName evidence="1">F-ATPase subunit beta</fullName>
    </alternativeName>
</protein>
<comment type="function">
    <text evidence="1">Produces ATP from ADP in the presence of a proton gradient across the membrane. The catalytic sites are hosted primarily by the beta subunits.</text>
</comment>
<comment type="catalytic activity">
    <reaction evidence="1">
        <text>ATP + H2O + 4 H(+)(in) = ADP + phosphate + 5 H(+)(out)</text>
        <dbReference type="Rhea" id="RHEA:57720"/>
        <dbReference type="ChEBI" id="CHEBI:15377"/>
        <dbReference type="ChEBI" id="CHEBI:15378"/>
        <dbReference type="ChEBI" id="CHEBI:30616"/>
        <dbReference type="ChEBI" id="CHEBI:43474"/>
        <dbReference type="ChEBI" id="CHEBI:456216"/>
        <dbReference type="EC" id="7.1.2.2"/>
    </reaction>
</comment>
<comment type="subunit">
    <text evidence="1">F-type ATPases have 2 components, CF(1) - the catalytic core - and CF(0) - the membrane proton channel. CF(1) has five subunits: alpha(3), beta(3), gamma(1), delta(1), epsilon(1). CF(0) has four main subunits: a(1), b(1), b'(1) and c(9-12).</text>
</comment>
<comment type="subcellular location">
    <subcellularLocation>
        <location evidence="1">Plastid</location>
        <location evidence="1">Chloroplast thylakoid membrane</location>
        <topology evidence="1">Peripheral membrane protein</topology>
    </subcellularLocation>
</comment>
<comment type="similarity">
    <text evidence="1">Belongs to the ATPase alpha/beta chains family.</text>
</comment>